<proteinExistence type="inferred from homology"/>
<keyword id="KW-1015">Disulfide bond</keyword>
<keyword id="KW-0391">Immunity</keyword>
<keyword id="KW-0393">Immunoglobulin domain</keyword>
<keyword id="KW-0490">MHC I</keyword>
<keyword id="KW-0964">Secreted</keyword>
<keyword id="KW-0732">Signal</keyword>
<organism>
    <name type="scientific">Saguinus midas midas</name>
    <name type="common">Golden-handed tamarin</name>
    <dbReference type="NCBI Taxonomy" id="78354"/>
    <lineage>
        <taxon>Eukaryota</taxon>
        <taxon>Metazoa</taxon>
        <taxon>Chordata</taxon>
        <taxon>Craniata</taxon>
        <taxon>Vertebrata</taxon>
        <taxon>Euteleostomi</taxon>
        <taxon>Mammalia</taxon>
        <taxon>Eutheria</taxon>
        <taxon>Euarchontoglires</taxon>
        <taxon>Primates</taxon>
        <taxon>Haplorrhini</taxon>
        <taxon>Platyrrhini</taxon>
        <taxon>Cebidae</taxon>
        <taxon>Callitrichinae</taxon>
        <taxon>Saguinus</taxon>
    </lineage>
</organism>
<sequence length="119" mass="13851">MARFVVVPLLVLLSLFGLEAIQHPPKIQVYSRYPADNGKPNFLNCYVSGFHPSDIEVDLLKNGKKIEKVEHSDLSFSKDWSFYLLYYTEFTPNEKDEYACRVSHVTFSTPKTVKWDRNM</sequence>
<name>B2MG_SAGMM</name>
<reference key="1">
    <citation type="journal article" date="1998" name="Immunogenetics">
        <title>Beta-2-microglobulin in neotropical primates (Platyrrhini).</title>
        <authorList>
            <person name="Canavez F.C."/>
            <person name="Ladasky J.J."/>
            <person name="Muniz J.A.P.C."/>
            <person name="Seuanez H.N."/>
            <person name="Parham P."/>
        </authorList>
    </citation>
    <scope>NUCLEOTIDE SEQUENCE [GENOMIC DNA]</scope>
    <source>
        <tissue>Blood</tissue>
    </source>
</reference>
<accession>P63070</accession>
<accession>O77516</accession>
<evidence type="ECO:0000250" key="1"/>
<evidence type="ECO:0000255" key="2">
    <source>
        <dbReference type="PROSITE-ProRule" id="PRU00114"/>
    </source>
</evidence>
<evidence type="ECO:0000305" key="3"/>
<protein>
    <recommendedName>
        <fullName>Beta-2-microglobulin</fullName>
    </recommendedName>
</protein>
<feature type="signal peptide" evidence="1">
    <location>
        <begin position="1"/>
        <end position="20"/>
    </location>
</feature>
<feature type="chain" id="PRO_0000018795" description="Beta-2-microglobulin">
    <location>
        <begin position="21"/>
        <end position="119"/>
    </location>
</feature>
<feature type="domain" description="Ig-like C1-type">
    <location>
        <begin position="25"/>
        <end position="114"/>
    </location>
</feature>
<feature type="disulfide bond" evidence="2">
    <location>
        <begin position="45"/>
        <end position="100"/>
    </location>
</feature>
<dbReference type="EMBL" id="AF032024">
    <property type="protein sequence ID" value="AAC52089.1"/>
    <property type="molecule type" value="Genomic_DNA"/>
</dbReference>
<dbReference type="EMBL" id="AF032023">
    <property type="protein sequence ID" value="AAC52089.1"/>
    <property type="status" value="JOINED"/>
    <property type="molecule type" value="Genomic_DNA"/>
</dbReference>
<dbReference type="SMR" id="P63070"/>
<dbReference type="GO" id="GO:0005576">
    <property type="term" value="C:extracellular region"/>
    <property type="evidence" value="ECO:0007669"/>
    <property type="project" value="UniProtKB-SubCell"/>
</dbReference>
<dbReference type="GO" id="GO:0042612">
    <property type="term" value="C:MHC class I protein complex"/>
    <property type="evidence" value="ECO:0007669"/>
    <property type="project" value="UniProtKB-KW"/>
</dbReference>
<dbReference type="GO" id="GO:0002474">
    <property type="term" value="P:antigen processing and presentation of peptide antigen via MHC class I"/>
    <property type="evidence" value="ECO:0007669"/>
    <property type="project" value="UniProtKB-KW"/>
</dbReference>
<dbReference type="GO" id="GO:0006955">
    <property type="term" value="P:immune response"/>
    <property type="evidence" value="ECO:0007669"/>
    <property type="project" value="InterPro"/>
</dbReference>
<dbReference type="CDD" id="cd05770">
    <property type="entry name" value="IgC1_beta2m"/>
    <property type="match status" value="1"/>
</dbReference>
<dbReference type="FunFam" id="2.60.40.10:FF:001005">
    <property type="entry name" value="Beta-2-microglobulin"/>
    <property type="match status" value="1"/>
</dbReference>
<dbReference type="Gene3D" id="2.60.40.10">
    <property type="entry name" value="Immunoglobulins"/>
    <property type="match status" value="1"/>
</dbReference>
<dbReference type="InterPro" id="IPR015707">
    <property type="entry name" value="B2Microglobulin"/>
</dbReference>
<dbReference type="InterPro" id="IPR007110">
    <property type="entry name" value="Ig-like_dom"/>
</dbReference>
<dbReference type="InterPro" id="IPR036179">
    <property type="entry name" value="Ig-like_dom_sf"/>
</dbReference>
<dbReference type="InterPro" id="IPR013783">
    <property type="entry name" value="Ig-like_fold"/>
</dbReference>
<dbReference type="InterPro" id="IPR003006">
    <property type="entry name" value="Ig/MHC_CS"/>
</dbReference>
<dbReference type="InterPro" id="IPR003597">
    <property type="entry name" value="Ig_C1-set"/>
</dbReference>
<dbReference type="InterPro" id="IPR050160">
    <property type="entry name" value="MHC/Immunoglobulin"/>
</dbReference>
<dbReference type="PANTHER" id="PTHR19944:SF62">
    <property type="entry name" value="BETA-2-MICROGLOBULIN"/>
    <property type="match status" value="1"/>
</dbReference>
<dbReference type="PANTHER" id="PTHR19944">
    <property type="entry name" value="MHC CLASS II-RELATED"/>
    <property type="match status" value="1"/>
</dbReference>
<dbReference type="Pfam" id="PF07654">
    <property type="entry name" value="C1-set"/>
    <property type="match status" value="1"/>
</dbReference>
<dbReference type="SMART" id="SM00407">
    <property type="entry name" value="IGc1"/>
    <property type="match status" value="1"/>
</dbReference>
<dbReference type="SUPFAM" id="SSF48726">
    <property type="entry name" value="Immunoglobulin"/>
    <property type="match status" value="1"/>
</dbReference>
<dbReference type="PROSITE" id="PS50835">
    <property type="entry name" value="IG_LIKE"/>
    <property type="match status" value="1"/>
</dbReference>
<dbReference type="PROSITE" id="PS00290">
    <property type="entry name" value="IG_MHC"/>
    <property type="match status" value="1"/>
</dbReference>
<comment type="function">
    <text evidence="1">Component of the class I major histocompatibility complex (MHC). Involved in the presentation of peptide antigens to the immune system (By similarity).</text>
</comment>
<comment type="subunit">
    <text evidence="1">Heterodimer of an alpha chain and a beta chain. Beta-2-microglobulin is the beta-chain of major histocompatibility complex class I molecules (By similarity).</text>
</comment>
<comment type="subcellular location">
    <subcellularLocation>
        <location evidence="1">Secreted</location>
    </subcellularLocation>
</comment>
<comment type="similarity">
    <text evidence="3">Belongs to the beta-2-microglobulin family.</text>
</comment>
<gene>
    <name type="primary">B2M</name>
</gene>